<protein>
    <recommendedName>
        <fullName>Cyanogenic beta-glucosidase</fullName>
        <ecNumber evidence="1">3.2.1.21</ecNumber>
    </recommendedName>
    <alternativeName>
        <fullName>Linamarase</fullName>
    </alternativeName>
</protein>
<sequence>LLSITTTHIHAFKPLPISFDDFSDLNRSCFAPGFVFGTASSAFQYEGAAFEDGKGPSIWDTFTHKYPEKIKDRTNGDVAIDEYHRYKEDIGIMKDMNLDAYRFSISWPRVLPKGKLSGGVNREGINYYNNLINEVLANGMQPYVTLFHWDVPQALEDEYRGFLGRNIVDDFRDYAELCFKEFGDRVKHWITLNEPWGVSMNAYAYGTFAPGRCSDWLKLNCTGGDSGREPYLAAHYQLLAHAAAARLYKTKYQASQNGIIGITLVSHWFEPASKEKADVDAAKRGLDFMLGWFMHPLTKGRYPESMRYLVRKRLPKFSTEESKELTGSFDFLGLNYYSSYYAAKAPRIPNARPAIQTDSLINATFEHNGKPLGPMAASSWLCIYPQGIRKLLLYVKNHYNNPVIYITENGRNSSTINTVTSRIPF</sequence>
<dbReference type="EC" id="3.2.1.21" evidence="1"/>
<dbReference type="EMBL" id="X56733">
    <property type="protein sequence ID" value="CAA40057.1"/>
    <property type="molecule type" value="mRNA"/>
</dbReference>
<dbReference type="PIR" id="S16580">
    <property type="entry name" value="GLJY14"/>
</dbReference>
<dbReference type="PDB" id="1CBG">
    <property type="method" value="X-ray"/>
    <property type="resolution" value="2.15 A"/>
    <property type="chains" value="A=12-412"/>
</dbReference>
<dbReference type="PDBsum" id="1CBG"/>
<dbReference type="SMR" id="P26205"/>
<dbReference type="CAZy" id="GH1">
    <property type="family name" value="Glycoside Hydrolase Family 1"/>
</dbReference>
<dbReference type="GlyCosmos" id="P26205">
    <property type="glycosylation" value="2 sites, No reported glycans"/>
</dbReference>
<dbReference type="EvolutionaryTrace" id="P26205"/>
<dbReference type="GO" id="GO:0008422">
    <property type="term" value="F:beta-glucosidase activity"/>
    <property type="evidence" value="ECO:0007669"/>
    <property type="project" value="UniProtKB-EC"/>
</dbReference>
<dbReference type="GO" id="GO:0005975">
    <property type="term" value="P:carbohydrate metabolic process"/>
    <property type="evidence" value="ECO:0007669"/>
    <property type="project" value="InterPro"/>
</dbReference>
<dbReference type="FunFam" id="3.20.20.80:FF:000020">
    <property type="entry name" value="Beta-glucosidase 12"/>
    <property type="match status" value="1"/>
</dbReference>
<dbReference type="Gene3D" id="3.20.20.80">
    <property type="entry name" value="Glycosidases"/>
    <property type="match status" value="1"/>
</dbReference>
<dbReference type="InterPro" id="IPR001360">
    <property type="entry name" value="Glyco_hydro_1"/>
</dbReference>
<dbReference type="InterPro" id="IPR033132">
    <property type="entry name" value="Glyco_hydro_1_N_CS"/>
</dbReference>
<dbReference type="InterPro" id="IPR017853">
    <property type="entry name" value="Glycoside_hydrolase_SF"/>
</dbReference>
<dbReference type="PANTHER" id="PTHR10353:SF240">
    <property type="entry name" value="BETA-GLUCOSIDASE, PUTATIVE-RELATED"/>
    <property type="match status" value="1"/>
</dbReference>
<dbReference type="PANTHER" id="PTHR10353">
    <property type="entry name" value="GLYCOSYL HYDROLASE"/>
    <property type="match status" value="1"/>
</dbReference>
<dbReference type="Pfam" id="PF00232">
    <property type="entry name" value="Glyco_hydro_1"/>
    <property type="match status" value="1"/>
</dbReference>
<dbReference type="SUPFAM" id="SSF51445">
    <property type="entry name" value="(Trans)glycosidases"/>
    <property type="match status" value="1"/>
</dbReference>
<dbReference type="PROSITE" id="PS00572">
    <property type="entry name" value="GLYCOSYL_HYDROL_F1_1"/>
    <property type="match status" value="1"/>
</dbReference>
<dbReference type="PROSITE" id="PS00653">
    <property type="entry name" value="GLYCOSYL_HYDROL_F1_2"/>
    <property type="match status" value="1"/>
</dbReference>
<evidence type="ECO:0000250" key="1">
    <source>
        <dbReference type="UniProtKB" id="O64879"/>
    </source>
</evidence>
<evidence type="ECO:0000250" key="2">
    <source>
        <dbReference type="UniProtKB" id="Q7XSK0"/>
    </source>
</evidence>
<evidence type="ECO:0000250" key="3">
    <source>
        <dbReference type="UniProtKB" id="Q8GU20"/>
    </source>
</evidence>
<evidence type="ECO:0000250" key="4">
    <source>
        <dbReference type="UniProtKB" id="Q8L7J2"/>
    </source>
</evidence>
<evidence type="ECO:0000250" key="5">
    <source>
        <dbReference type="UniProtKB" id="Q9SPP9"/>
    </source>
</evidence>
<evidence type="ECO:0000255" key="6">
    <source>
        <dbReference type="PROSITE-ProRule" id="PRU00498"/>
    </source>
</evidence>
<evidence type="ECO:0000269" key="7">
    <source>
    </source>
</evidence>
<evidence type="ECO:0000269" key="8">
    <source>
    </source>
</evidence>
<evidence type="ECO:0000305" key="9"/>
<evidence type="ECO:0007744" key="10">
    <source>
        <dbReference type="PDB" id="1CBG"/>
    </source>
</evidence>
<evidence type="ECO:0007829" key="11">
    <source>
        <dbReference type="PDB" id="1CBG"/>
    </source>
</evidence>
<accession>P26205</accession>
<reference key="1">
    <citation type="journal article" date="1991" name="Plant Mol. Biol.">
        <title>Nucleotide and derived amino acid sequence of the cyanogenic beta-glucosidase (linamarase) from white clover (Trifolium repens L.).</title>
        <authorList>
            <person name="Oxtoby E."/>
            <person name="Dunn M.A."/>
            <person name="Pancoro A."/>
            <person name="Hughes M.A."/>
        </authorList>
    </citation>
    <scope>NUCLEOTIDE SEQUENCE [MRNA]</scope>
    <scope>PROTEIN SEQUENCE OF 12-25 AND 125-147</scope>
    <source>
        <strain>S100 (EG)</strain>
        <tissue>Leaf</tissue>
    </source>
</reference>
<reference key="2">
    <citation type="journal article" date="1995" name="Structure">
        <title>The crystal structure of a cyanogenic beta-glucosidase from white clover, a family 1 glycosyl hydrolase.</title>
        <authorList>
            <person name="Barrett T."/>
            <person name="Suresh C.G."/>
            <person name="Tolley S.P."/>
            <person name="Dodson E.J."/>
            <person name="Hughes M.A."/>
        </authorList>
    </citation>
    <scope>X-RAY CRYSTALLOGRAPHY (2.15 ANGSTROMS)</scope>
</reference>
<feature type="signal peptide" evidence="7">
    <location>
        <begin position="1" status="less than"/>
        <end position="11"/>
    </location>
</feature>
<feature type="chain" id="PRO_0000011765" description="Cyanogenic beta-glucosidase">
    <location>
        <begin position="12"/>
        <end position="425"/>
    </location>
</feature>
<feature type="active site" description="Proton donor" evidence="2">
    <location>
        <position position="194"/>
    </location>
</feature>
<feature type="active site" description="Nucleophile" evidence="2">
    <location>
        <position position="408"/>
    </location>
</feature>
<feature type="binding site" evidence="4">
    <location>
        <position position="44"/>
    </location>
    <ligand>
        <name>a beta-D-glucoside</name>
        <dbReference type="ChEBI" id="CHEBI:22798"/>
    </ligand>
</feature>
<feature type="binding site" evidence="4">
    <location>
        <position position="148"/>
    </location>
    <ligand>
        <name>a beta-D-glucoside</name>
        <dbReference type="ChEBI" id="CHEBI:22798"/>
    </ligand>
</feature>
<feature type="binding site" evidence="3">
    <location>
        <begin position="193"/>
        <end position="194"/>
    </location>
    <ligand>
        <name>a beta-D-glucoside</name>
        <dbReference type="ChEBI" id="CHEBI:22798"/>
    </ligand>
</feature>
<feature type="binding site" evidence="4">
    <location>
        <position position="337"/>
    </location>
    <ligand>
        <name>a beta-D-glucoside</name>
        <dbReference type="ChEBI" id="CHEBI:22798"/>
    </ligand>
</feature>
<feature type="binding site" evidence="5">
    <location>
        <position position="408"/>
    </location>
    <ligand>
        <name>a beta-D-glucoside</name>
        <dbReference type="ChEBI" id="CHEBI:22798"/>
    </ligand>
</feature>
<feature type="glycosylation site" description="N-linked (GlcNAc...) asparagine" evidence="6">
    <location>
        <position position="220"/>
    </location>
</feature>
<feature type="glycosylation site" description="N-linked (GlcNAc...) asparagine" evidence="6">
    <location>
        <position position="412"/>
    </location>
</feature>
<feature type="disulfide bond" evidence="8 10">
    <location>
        <begin position="213"/>
        <end position="221"/>
    </location>
</feature>
<feature type="non-terminal residue">
    <location>
        <position position="1"/>
    </location>
</feature>
<feature type="helix" evidence="11">
    <location>
        <begin position="22"/>
        <end position="24"/>
    </location>
</feature>
<feature type="helix" evidence="11">
    <location>
        <begin position="27"/>
        <end position="29"/>
    </location>
</feature>
<feature type="strand" evidence="11">
    <location>
        <begin position="35"/>
        <end position="39"/>
    </location>
</feature>
<feature type="helix" evidence="11">
    <location>
        <begin position="42"/>
        <end position="45"/>
    </location>
</feature>
<feature type="strand" evidence="11">
    <location>
        <begin position="49"/>
        <end position="51"/>
    </location>
</feature>
<feature type="helix" evidence="11">
    <location>
        <begin position="58"/>
        <end position="65"/>
    </location>
</feature>
<feature type="helix" evidence="11">
    <location>
        <begin position="67"/>
        <end position="69"/>
    </location>
</feature>
<feature type="strand" evidence="11">
    <location>
        <begin position="76"/>
        <end position="78"/>
    </location>
</feature>
<feature type="helix" evidence="11">
    <location>
        <begin position="82"/>
        <end position="95"/>
    </location>
</feature>
<feature type="strand" evidence="11">
    <location>
        <begin position="100"/>
        <end position="104"/>
    </location>
</feature>
<feature type="helix" evidence="11">
    <location>
        <begin position="107"/>
        <end position="110"/>
    </location>
</feature>
<feature type="helix" evidence="11">
    <location>
        <begin position="116"/>
        <end position="118"/>
    </location>
</feature>
<feature type="helix" evidence="11">
    <location>
        <begin position="122"/>
        <end position="137"/>
    </location>
</feature>
<feature type="strand" evidence="11">
    <location>
        <begin position="141"/>
        <end position="149"/>
    </location>
</feature>
<feature type="helix" evidence="11">
    <location>
        <begin position="153"/>
        <end position="159"/>
    </location>
</feature>
<feature type="helix" evidence="11">
    <location>
        <begin position="161"/>
        <end position="163"/>
    </location>
</feature>
<feature type="helix" evidence="11">
    <location>
        <begin position="167"/>
        <end position="182"/>
    </location>
</feature>
<feature type="turn" evidence="11">
    <location>
        <begin position="183"/>
        <end position="185"/>
    </location>
</feature>
<feature type="strand" evidence="11">
    <location>
        <begin position="188"/>
        <end position="193"/>
    </location>
</feature>
<feature type="helix" evidence="11">
    <location>
        <begin position="195"/>
        <end position="203"/>
    </location>
</feature>
<feature type="helix" evidence="11">
    <location>
        <begin position="215"/>
        <end position="217"/>
    </location>
</feature>
<feature type="turn" evidence="11">
    <location>
        <begin position="226"/>
        <end position="228"/>
    </location>
</feature>
<feature type="helix" evidence="11">
    <location>
        <begin position="229"/>
        <end position="251"/>
    </location>
</feature>
<feature type="helix" evidence="11">
    <location>
        <begin position="253"/>
        <end position="256"/>
    </location>
</feature>
<feature type="strand" evidence="11">
    <location>
        <begin position="259"/>
        <end position="265"/>
    </location>
</feature>
<feature type="strand" evidence="11">
    <location>
        <begin position="268"/>
        <end position="275"/>
    </location>
</feature>
<feature type="helix" evidence="11">
    <location>
        <begin position="276"/>
        <end position="289"/>
    </location>
</feature>
<feature type="helix" evidence="11">
    <location>
        <begin position="291"/>
        <end position="299"/>
    </location>
</feature>
<feature type="helix" evidence="11">
    <location>
        <begin position="304"/>
        <end position="310"/>
    </location>
</feature>
<feature type="helix" evidence="11">
    <location>
        <begin position="311"/>
        <end position="313"/>
    </location>
</feature>
<feature type="helix" evidence="11">
    <location>
        <begin position="319"/>
        <end position="325"/>
    </location>
</feature>
<feature type="strand" evidence="11">
    <location>
        <begin position="330"/>
        <end position="335"/>
    </location>
</feature>
<feature type="strand" evidence="11">
    <location>
        <begin position="339"/>
        <end position="344"/>
    </location>
</feature>
<feature type="helix" evidence="11">
    <location>
        <begin position="355"/>
        <end position="358"/>
    </location>
</feature>
<feature type="strand" evidence="11">
    <location>
        <begin position="361"/>
        <end position="367"/>
    </location>
</feature>
<feature type="strand" evidence="11">
    <location>
        <begin position="370"/>
        <end position="373"/>
    </location>
</feature>
<feature type="helix" evidence="11">
    <location>
        <begin position="386"/>
        <end position="398"/>
    </location>
</feature>
<feature type="strand" evidence="11">
    <location>
        <begin position="404"/>
        <end position="408"/>
    </location>
</feature>
<keyword id="KW-0002">3D-structure</keyword>
<keyword id="KW-0903">Direct protein sequencing</keyword>
<keyword id="KW-1015">Disulfide bond</keyword>
<keyword id="KW-0325">Glycoprotein</keyword>
<keyword id="KW-0326">Glycosidase</keyword>
<keyword id="KW-0378">Hydrolase</keyword>
<keyword id="KW-0732">Signal</keyword>
<gene>
    <name type="primary">LI</name>
</gene>
<name>BGLT_TRIRP</name>
<proteinExistence type="evidence at protein level"/>
<organism>
    <name type="scientific">Trifolium repens</name>
    <name type="common">Creeping white clover</name>
    <dbReference type="NCBI Taxonomy" id="3899"/>
    <lineage>
        <taxon>Eukaryota</taxon>
        <taxon>Viridiplantae</taxon>
        <taxon>Streptophyta</taxon>
        <taxon>Embryophyta</taxon>
        <taxon>Tracheophyta</taxon>
        <taxon>Spermatophyta</taxon>
        <taxon>Magnoliopsida</taxon>
        <taxon>eudicotyledons</taxon>
        <taxon>Gunneridae</taxon>
        <taxon>Pentapetalae</taxon>
        <taxon>rosids</taxon>
        <taxon>fabids</taxon>
        <taxon>Fabales</taxon>
        <taxon>Fabaceae</taxon>
        <taxon>Papilionoideae</taxon>
        <taxon>50 kb inversion clade</taxon>
        <taxon>NPAAA clade</taxon>
        <taxon>Hologalegina</taxon>
        <taxon>IRL clade</taxon>
        <taxon>Trifolieae</taxon>
        <taxon>Trifolium</taxon>
    </lineage>
</organism>
<comment type="function">
    <text>Hydrolyzes cyanoglucosides, contributing to the release of hydrocyanic acid, which functions as a defense mechanism against small predators, when the leaf tissue is damaged.</text>
</comment>
<comment type="catalytic activity">
    <reaction evidence="1">
        <text>Hydrolysis of terminal, non-reducing beta-D-glucosyl residues with release of beta-D-glucose.</text>
        <dbReference type="EC" id="3.2.1.21"/>
    </reaction>
</comment>
<comment type="subunit">
    <text>Homodimer.</text>
</comment>
<comment type="tissue specificity">
    <text>Leaves.</text>
</comment>
<comment type="similarity">
    <text evidence="9">Belongs to the glycosyl hydrolase 1 family.</text>
</comment>